<protein>
    <recommendedName>
        <fullName>Mothers against decapentaplegic homolog 5</fullName>
        <shortName>MAD homolog 5</shortName>
        <shortName>Mothers against DPP homolog 5</shortName>
    </recommendedName>
    <alternativeName>
        <fullName>Dwarfin-C</fullName>
        <shortName>Dwf-C</shortName>
    </alternativeName>
    <alternativeName>
        <fullName>SMAD family member 5</fullName>
        <shortName>SMAD 5</shortName>
        <shortName>Smad5</shortName>
        <shortName>mSmad5</shortName>
    </alternativeName>
</protein>
<feature type="initiator methionine" description="Removed" evidence="1">
    <location>
        <position position="1"/>
    </location>
</feature>
<feature type="chain" id="PRO_0000090866" description="Mothers against decapentaplegic homolog 5">
    <location>
        <begin position="2"/>
        <end position="465"/>
    </location>
</feature>
<feature type="domain" description="MH1" evidence="2">
    <location>
        <begin position="13"/>
        <end position="137"/>
    </location>
</feature>
<feature type="domain" description="MH2" evidence="3">
    <location>
        <begin position="271"/>
        <end position="465"/>
    </location>
</feature>
<feature type="region of interest" description="Disordered" evidence="4">
    <location>
        <begin position="163"/>
        <end position="251"/>
    </location>
</feature>
<feature type="compositionally biased region" description="Polar residues" evidence="4">
    <location>
        <begin position="169"/>
        <end position="182"/>
    </location>
</feature>
<feature type="compositionally biased region" description="Pro residues" evidence="4">
    <location>
        <begin position="186"/>
        <end position="197"/>
    </location>
</feature>
<feature type="compositionally biased region" description="Low complexity" evidence="4">
    <location>
        <begin position="198"/>
        <end position="214"/>
    </location>
</feature>
<feature type="compositionally biased region" description="Polar residues" evidence="4">
    <location>
        <begin position="237"/>
        <end position="251"/>
    </location>
</feature>
<feature type="binding site" evidence="10">
    <location>
        <position position="65"/>
    </location>
    <ligand>
        <name>Zn(2+)</name>
        <dbReference type="ChEBI" id="CHEBI:29105"/>
    </ligand>
</feature>
<feature type="binding site" evidence="10">
    <location>
        <position position="110"/>
    </location>
    <ligand>
        <name>Zn(2+)</name>
        <dbReference type="ChEBI" id="CHEBI:29105"/>
    </ligand>
</feature>
<feature type="binding site" evidence="10">
    <location>
        <position position="122"/>
    </location>
    <ligand>
        <name>Zn(2+)</name>
        <dbReference type="ChEBI" id="CHEBI:29105"/>
    </ligand>
</feature>
<feature type="binding site" evidence="10">
    <location>
        <position position="127"/>
    </location>
    <ligand>
        <name>Zn(2+)</name>
        <dbReference type="ChEBI" id="CHEBI:29105"/>
    </ligand>
</feature>
<feature type="modified residue" description="N-acetylthreonine" evidence="1">
    <location>
        <position position="2"/>
    </location>
</feature>
<feature type="modified residue" description="Phosphoserine" evidence="1 3">
    <location>
        <position position="463"/>
    </location>
</feature>
<feature type="modified residue" description="Phosphoserine" evidence="1 3">
    <location>
        <position position="465"/>
    </location>
</feature>
<feature type="mutagenesis site" description="Exhibits impaired binding affinity to GC-BRE DNA sequence." evidence="10">
    <original>H</original>
    <variation>A</variation>
    <location>
        <position position="80"/>
    </location>
</feature>
<feature type="sequence conflict" description="In Ref. 2; AAB39737." evidence="11" ref="2">
    <original>S</original>
    <variation>P</variation>
    <location>
        <position position="196"/>
    </location>
</feature>
<feature type="helix" evidence="15">
    <location>
        <begin position="13"/>
        <end position="21"/>
    </location>
</feature>
<feature type="helix" evidence="15">
    <location>
        <begin position="26"/>
        <end position="44"/>
    </location>
</feature>
<feature type="strand" evidence="16">
    <location>
        <begin position="45"/>
        <end position="47"/>
    </location>
</feature>
<feature type="helix" evidence="15">
    <location>
        <begin position="48"/>
        <end position="57"/>
    </location>
</feature>
<feature type="strand" evidence="15">
    <location>
        <begin position="58"/>
        <end position="61"/>
    </location>
</feature>
<feature type="strand" evidence="15">
    <location>
        <begin position="67"/>
        <end position="69"/>
    </location>
</feature>
<feature type="strand" evidence="15">
    <location>
        <begin position="72"/>
        <end position="74"/>
    </location>
</feature>
<feature type="strand" evidence="15">
    <location>
        <begin position="76"/>
        <end position="78"/>
    </location>
</feature>
<feature type="strand" evidence="15">
    <location>
        <begin position="81"/>
        <end position="83"/>
    </location>
</feature>
<feature type="helix" evidence="15">
    <location>
        <begin position="85"/>
        <end position="93"/>
    </location>
</feature>
<feature type="helix" evidence="15">
    <location>
        <begin position="101"/>
        <end position="103"/>
    </location>
</feature>
<feature type="strand" evidence="15">
    <location>
        <begin position="104"/>
        <end position="106"/>
    </location>
</feature>
<feature type="helix" evidence="15">
    <location>
        <begin position="114"/>
        <end position="116"/>
    </location>
</feature>
<feature type="strand" evidence="15">
    <location>
        <begin position="118"/>
        <end position="122"/>
    </location>
</feature>
<feature type="helix" evidence="15">
    <location>
        <begin position="125"/>
        <end position="127"/>
    </location>
</feature>
<feature type="strand" evidence="15">
    <location>
        <begin position="128"/>
        <end position="130"/>
    </location>
</feature>
<evidence type="ECO:0000250" key="1">
    <source>
        <dbReference type="UniProtKB" id="Q99717"/>
    </source>
</evidence>
<evidence type="ECO:0000255" key="2">
    <source>
        <dbReference type="PROSITE-ProRule" id="PRU00438"/>
    </source>
</evidence>
<evidence type="ECO:0000255" key="3">
    <source>
        <dbReference type="PROSITE-ProRule" id="PRU00439"/>
    </source>
</evidence>
<evidence type="ECO:0000256" key="4">
    <source>
        <dbReference type="SAM" id="MobiDB-lite"/>
    </source>
</evidence>
<evidence type="ECO:0000269" key="5">
    <source>
    </source>
</evidence>
<evidence type="ECO:0000269" key="6">
    <source>
    </source>
</evidence>
<evidence type="ECO:0000269" key="7">
    <source>
    </source>
</evidence>
<evidence type="ECO:0000269" key="8">
    <source>
    </source>
</evidence>
<evidence type="ECO:0000269" key="9">
    <source>
    </source>
</evidence>
<evidence type="ECO:0000269" key="10">
    <source>
    </source>
</evidence>
<evidence type="ECO:0000305" key="11"/>
<evidence type="ECO:0007744" key="12">
    <source>
        <dbReference type="PDB" id="5X6G"/>
    </source>
</evidence>
<evidence type="ECO:0007744" key="13">
    <source>
        <dbReference type="PDB" id="5X6H"/>
    </source>
</evidence>
<evidence type="ECO:0007744" key="14">
    <source>
        <dbReference type="PDB" id="5X6M"/>
    </source>
</evidence>
<evidence type="ECO:0007829" key="15">
    <source>
        <dbReference type="PDB" id="5X6G"/>
    </source>
</evidence>
<evidence type="ECO:0007829" key="16">
    <source>
        <dbReference type="PDB" id="5X6M"/>
    </source>
</evidence>
<sequence length="465" mass="52172">MTSMASLFSFTSPAVKRLLGWKQGDEEEKWAEKAVDALVKKLKKKKGAMEELEKALSSPGQPSKCVTIPRSLDGRLQVSHRKGLPHVIYCRVWRWPDLQSHHELKPLDICEFPFGSKQKEVCINPYHYKRVESPVLPPVLVPRHNEFNPQHSLLVQFRNLSHNEPHMPQNATFPDSFHQPNNAPFPLSPNSPYPPSPASSTYPNSPASSGPGSPFQLPADTPPPAYMPPDDQMAPDNSQPMDTSSNMIPQTMPSISSRDVQPVAYEEPKHWCSIVYYELNNRVGEAFHASSTSVLVDGFTDPSNNKSRFCLGLLSNVNRNSTIENTRRHIGKGVHLYYVGGEVYAECLSDSSIFVQSRNCNFHHGFHPTTVCKIPSSCSLKIFNNQEFAQLLAQSVNHGFEAVYELTKMCTIRMSFVKGWGAEYHRQDVTSTPCWIEIHLHGPLQWLDKVLTQMGSPLNPISSVS</sequence>
<proteinExistence type="evidence at protein level"/>
<comment type="function">
    <text evidence="1 5 7">Transcriptional regulator that plays a role in various cellular processes including embryonic development, cell differentiation, angiogenesis and tissue homeostasis (PubMed:10079220, PubMed:12393578). Upon BMP ligand binding to their receptors at the cell surface, is phosphorylated by activated type I BMP receptors (BMPRIs) and associates with SMAD4 to form a heteromeric complex which translocates into the nucleus acting as transcription factor. In turn, the hetero-trimeric complex recognizes cis-regulatory elements containing Smad Binding Elements (SBEs) to modulate the outcome of the signaling network (PubMed:26304548). Non-phosphorylated SMAD5 has a cytoplasmic role in energy metabolism regulation by promoting mitochondrial respiration and glycolysis in response to cytoplasmic pH changes. Mechanistically, interacts with hexokinase 1/HK1 and thereby accelerates glycolysis.</text>
</comment>
<comment type="subunit">
    <text evidence="1 6 8 9 10">Homodimer. Forms trimers with the co-SMAD SMAD4 (By similarity). Interacts with PEBP2-alpha subunit and SMURF1. Interacts with SUV39H1 and SUV39H2. Interacts (via MH2 domain) with LEMD3. Interacts with WWP1. Interacts with TMEM119 (PubMed:21239498). Interacts with ZNF8 (PubMed:12370310). Interacts with RANBP3L (By similarity). Interacts with HK1 (By similarity). Interacts with HGS; this interaction attenuates BMP signaling (By similarity).</text>
</comment>
<comment type="interaction">
    <interactant intactId="EBI-7066475">
        <id>P97454</id>
    </interactant>
    <interactant intactId="EBI-925160">
        <id>Q62424</id>
        <label>Hoxa13</label>
    </interactant>
    <organismsDiffer>false</organismsDiffer>
    <experiments>3</experiments>
</comment>
<comment type="subcellular location">
    <subcellularLocation>
        <location evidence="1">Cytoplasm</location>
    </subcellularLocation>
    <subcellularLocation>
        <location evidence="1">Nucleus</location>
    </subcellularLocation>
    <subcellularLocation>
        <location evidence="1">Mitochondrion</location>
    </subcellularLocation>
    <text evidence="1">Cytoplasmic in the absence of ligand. Migrates to the nucleus when complexed with SMAD4.</text>
</comment>
<comment type="tissue specificity">
    <text evidence="5">Predominantly expressed in mesenchyme and somites during embryogenesis, and present in many tissues of the adult.</text>
</comment>
<comment type="PTM">
    <text evidence="1">Phosphorylated on serine by BMP (bone morphogenetic proteins) type 1 receptor kinase.</text>
</comment>
<comment type="PTM">
    <text evidence="1">Ubiquitin-mediated proteolysis by SMAD-specific E3 ubiquitin ligase SMURF1.</text>
</comment>
<comment type="disruption phenotype">
    <text evidence="5">Disruption of SMAD5 gene leads to the mid-gestation death of mutant embryos largely due to extraembryonic yolk sac defects.</text>
</comment>
<comment type="similarity">
    <text evidence="11">Belongs to the dwarfin/SMAD family.</text>
</comment>
<accession>P97454</accession>
<accession>P70341</accession>
<accession>Q810K0</accession>
<dbReference type="EMBL" id="U58993">
    <property type="protein sequence ID" value="AAB07871.1"/>
    <property type="molecule type" value="mRNA"/>
</dbReference>
<dbReference type="EMBL" id="U77638">
    <property type="protein sequence ID" value="AAB39737.1"/>
    <property type="molecule type" value="mRNA"/>
</dbReference>
<dbReference type="EMBL" id="AF063006">
    <property type="protein sequence ID" value="AAC83580.1"/>
    <property type="molecule type" value="mRNA"/>
</dbReference>
<dbReference type="EMBL" id="AK082997">
    <property type="protein sequence ID" value="BAC38724.1"/>
    <property type="molecule type" value="mRNA"/>
</dbReference>
<dbReference type="EMBL" id="BC050001">
    <property type="protein sequence ID" value="AAH50001.2"/>
    <property type="molecule type" value="mRNA"/>
</dbReference>
<dbReference type="CCDS" id="CCDS26565.1"/>
<dbReference type="RefSeq" id="NP_001157513.1">
    <property type="nucleotide sequence ID" value="NM_001164041.1"/>
</dbReference>
<dbReference type="RefSeq" id="NP_001157514.1">
    <property type="nucleotide sequence ID" value="NM_001164042.1"/>
</dbReference>
<dbReference type="RefSeq" id="NP_032567.1">
    <property type="nucleotide sequence ID" value="NM_008541.3"/>
</dbReference>
<dbReference type="RefSeq" id="XP_006517180.1">
    <property type="nucleotide sequence ID" value="XM_006517117.3"/>
</dbReference>
<dbReference type="RefSeq" id="XP_006517181.1">
    <property type="nucleotide sequence ID" value="XM_006517118.5"/>
</dbReference>
<dbReference type="RefSeq" id="XP_030103031.1">
    <property type="nucleotide sequence ID" value="XM_030247171.2"/>
</dbReference>
<dbReference type="RefSeq" id="XP_036013775.1">
    <property type="nucleotide sequence ID" value="XM_036157882.1"/>
</dbReference>
<dbReference type="PDB" id="5X6G">
    <property type="method" value="X-ray"/>
    <property type="resolution" value="3.05 A"/>
    <property type="chains" value="A/B=1-143"/>
</dbReference>
<dbReference type="PDB" id="5X6H">
    <property type="method" value="X-ray"/>
    <property type="resolution" value="3.10 A"/>
    <property type="chains" value="B=1-143"/>
</dbReference>
<dbReference type="PDB" id="5X6M">
    <property type="method" value="X-ray"/>
    <property type="resolution" value="3.20 A"/>
    <property type="chains" value="A/B/E/F=1-143"/>
</dbReference>
<dbReference type="PDBsum" id="5X6G"/>
<dbReference type="PDBsum" id="5X6H"/>
<dbReference type="PDBsum" id="5X6M"/>
<dbReference type="SMR" id="P97454"/>
<dbReference type="BioGRID" id="201278">
    <property type="interactions" value="15"/>
</dbReference>
<dbReference type="FunCoup" id="P97454">
    <property type="interactions" value="4494"/>
</dbReference>
<dbReference type="IntAct" id="P97454">
    <property type="interactions" value="3"/>
</dbReference>
<dbReference type="MINT" id="P97454"/>
<dbReference type="STRING" id="10090.ENSMUSP00000065798"/>
<dbReference type="ChEMBL" id="CHEMBL3883282"/>
<dbReference type="iPTMnet" id="P97454"/>
<dbReference type="PhosphoSitePlus" id="P97454"/>
<dbReference type="PaxDb" id="10090-ENSMUSP00000105502"/>
<dbReference type="PeptideAtlas" id="P97454"/>
<dbReference type="ProteomicsDB" id="257256"/>
<dbReference type="Pumba" id="P97454"/>
<dbReference type="Antibodypedia" id="7303">
    <property type="antibodies" value="608 antibodies from 41 providers"/>
</dbReference>
<dbReference type="DNASU" id="17129"/>
<dbReference type="Ensembl" id="ENSMUST00000069557.14">
    <property type="protein sequence ID" value="ENSMUSP00000065798.8"/>
    <property type="gene ID" value="ENSMUSG00000021540.17"/>
</dbReference>
<dbReference type="Ensembl" id="ENSMUST00000109874.2">
    <property type="protein sequence ID" value="ENSMUSP00000105500.2"/>
    <property type="gene ID" value="ENSMUSG00000021540.17"/>
</dbReference>
<dbReference type="Ensembl" id="ENSMUST00000109876.8">
    <property type="protein sequence ID" value="ENSMUSP00000105502.2"/>
    <property type="gene ID" value="ENSMUSG00000021540.17"/>
</dbReference>
<dbReference type="GeneID" id="17129"/>
<dbReference type="KEGG" id="mmu:17129"/>
<dbReference type="UCSC" id="uc007qsw.2">
    <property type="organism name" value="mouse"/>
</dbReference>
<dbReference type="AGR" id="MGI:1328787"/>
<dbReference type="CTD" id="4090"/>
<dbReference type="MGI" id="MGI:1328787">
    <property type="gene designation" value="Smad5"/>
</dbReference>
<dbReference type="VEuPathDB" id="HostDB:ENSMUSG00000021540"/>
<dbReference type="eggNOG" id="KOG3701">
    <property type="taxonomic scope" value="Eukaryota"/>
</dbReference>
<dbReference type="GeneTree" id="ENSGT00940000155437"/>
<dbReference type="HOGENOM" id="CLU_026736_0_2_1"/>
<dbReference type="InParanoid" id="P97454"/>
<dbReference type="OMA" id="QPMDTGN"/>
<dbReference type="OrthoDB" id="5794312at2759"/>
<dbReference type="PhylomeDB" id="P97454"/>
<dbReference type="TreeFam" id="TF314923"/>
<dbReference type="Reactome" id="R-MMU-201451">
    <property type="pathway name" value="Signaling by BMP"/>
</dbReference>
<dbReference type="BioGRID-ORCS" id="17129">
    <property type="hits" value="3 hits in 79 CRISPR screens"/>
</dbReference>
<dbReference type="PRO" id="PR:P97454"/>
<dbReference type="Proteomes" id="UP000000589">
    <property type="component" value="Chromosome 13"/>
</dbReference>
<dbReference type="RNAct" id="P97454">
    <property type="molecule type" value="protein"/>
</dbReference>
<dbReference type="Bgee" id="ENSMUSG00000021540">
    <property type="expression patterns" value="Expressed in undifferentiated genital tubercle and 272 other cell types or tissues"/>
</dbReference>
<dbReference type="GO" id="GO:0005737">
    <property type="term" value="C:cytoplasm"/>
    <property type="evidence" value="ECO:0000314"/>
    <property type="project" value="BHF-UCL"/>
</dbReference>
<dbReference type="GO" id="GO:0005829">
    <property type="term" value="C:cytosol"/>
    <property type="evidence" value="ECO:0007669"/>
    <property type="project" value="Ensembl"/>
</dbReference>
<dbReference type="GO" id="GO:0005739">
    <property type="term" value="C:mitochondrion"/>
    <property type="evidence" value="ECO:0007669"/>
    <property type="project" value="UniProtKB-SubCell"/>
</dbReference>
<dbReference type="GO" id="GO:0005654">
    <property type="term" value="C:nucleoplasm"/>
    <property type="evidence" value="ECO:0007669"/>
    <property type="project" value="Ensembl"/>
</dbReference>
<dbReference type="GO" id="GO:0005634">
    <property type="term" value="C:nucleus"/>
    <property type="evidence" value="ECO:0000314"/>
    <property type="project" value="UniProtKB"/>
</dbReference>
<dbReference type="GO" id="GO:0032991">
    <property type="term" value="C:protein-containing complex"/>
    <property type="evidence" value="ECO:0000266"/>
    <property type="project" value="MGI"/>
</dbReference>
<dbReference type="GO" id="GO:0005667">
    <property type="term" value="C:transcription regulator complex"/>
    <property type="evidence" value="ECO:0007669"/>
    <property type="project" value="InterPro"/>
</dbReference>
<dbReference type="GO" id="GO:0017151">
    <property type="term" value="F:DEAD/H-box RNA helicase binding"/>
    <property type="evidence" value="ECO:0007669"/>
    <property type="project" value="Ensembl"/>
</dbReference>
<dbReference type="GO" id="GO:0001227">
    <property type="term" value="F:DNA-binding transcription repressor activity, RNA polymerase II-specific"/>
    <property type="evidence" value="ECO:0000314"/>
    <property type="project" value="NTNU_SB"/>
</dbReference>
<dbReference type="GO" id="GO:0046872">
    <property type="term" value="F:metal ion binding"/>
    <property type="evidence" value="ECO:0007669"/>
    <property type="project" value="UniProtKB-KW"/>
</dbReference>
<dbReference type="GO" id="GO:0000978">
    <property type="term" value="F:RNA polymerase II cis-regulatory region sequence-specific DNA binding"/>
    <property type="evidence" value="ECO:0000314"/>
    <property type="project" value="MGI"/>
</dbReference>
<dbReference type="GO" id="GO:0000977">
    <property type="term" value="F:RNA polymerase II transcription regulatory region sequence-specific DNA binding"/>
    <property type="evidence" value="ECO:0000314"/>
    <property type="project" value="NTNU_SB"/>
</dbReference>
<dbReference type="GO" id="GO:0031625">
    <property type="term" value="F:ubiquitin protein ligase binding"/>
    <property type="evidence" value="ECO:0007669"/>
    <property type="project" value="Ensembl"/>
</dbReference>
<dbReference type="GO" id="GO:0001525">
    <property type="term" value="P:angiogenesis"/>
    <property type="evidence" value="ECO:0007669"/>
    <property type="project" value="UniProtKB-KW"/>
</dbReference>
<dbReference type="GO" id="GO:0030509">
    <property type="term" value="P:BMP signaling pathway"/>
    <property type="evidence" value="ECO:0000314"/>
    <property type="project" value="MGI"/>
</dbReference>
<dbReference type="GO" id="GO:0060348">
    <property type="term" value="P:bone development"/>
    <property type="evidence" value="ECO:0000316"/>
    <property type="project" value="MGI"/>
</dbReference>
<dbReference type="GO" id="GO:0060048">
    <property type="term" value="P:cardiac muscle contraction"/>
    <property type="evidence" value="ECO:0000315"/>
    <property type="project" value="MGI"/>
</dbReference>
<dbReference type="GO" id="GO:0051216">
    <property type="term" value="P:cartilage development"/>
    <property type="evidence" value="ECO:0000316"/>
    <property type="project" value="MGI"/>
</dbReference>
<dbReference type="GO" id="GO:0009880">
    <property type="term" value="P:embryonic pattern specification"/>
    <property type="evidence" value="ECO:0000250"/>
    <property type="project" value="UniProtKB"/>
</dbReference>
<dbReference type="GO" id="GO:0030218">
    <property type="term" value="P:erythrocyte differentiation"/>
    <property type="evidence" value="ECO:0000315"/>
    <property type="project" value="MGI"/>
</dbReference>
<dbReference type="GO" id="GO:0007281">
    <property type="term" value="P:germ cell development"/>
    <property type="evidence" value="ECO:0000315"/>
    <property type="project" value="MGI"/>
</dbReference>
<dbReference type="GO" id="GO:0006879">
    <property type="term" value="P:intracellular iron ion homeostasis"/>
    <property type="evidence" value="ECO:0007669"/>
    <property type="project" value="Ensembl"/>
</dbReference>
<dbReference type="GO" id="GO:0001880">
    <property type="term" value="P:Mullerian duct regression"/>
    <property type="evidence" value="ECO:0007669"/>
    <property type="project" value="Ensembl"/>
</dbReference>
<dbReference type="GO" id="GO:0043066">
    <property type="term" value="P:negative regulation of apoptotic process"/>
    <property type="evidence" value="ECO:0007669"/>
    <property type="project" value="Ensembl"/>
</dbReference>
<dbReference type="GO" id="GO:1902045">
    <property type="term" value="P:negative regulation of Fas signaling pathway"/>
    <property type="evidence" value="ECO:0007669"/>
    <property type="project" value="Ensembl"/>
</dbReference>
<dbReference type="GO" id="GO:0010629">
    <property type="term" value="P:negative regulation of gene expression"/>
    <property type="evidence" value="ECO:0007669"/>
    <property type="project" value="Ensembl"/>
</dbReference>
<dbReference type="GO" id="GO:0000122">
    <property type="term" value="P:negative regulation of transcription by RNA polymerase II"/>
    <property type="evidence" value="ECO:0000314"/>
    <property type="project" value="NTNU_SB"/>
</dbReference>
<dbReference type="GO" id="GO:0002051">
    <property type="term" value="P:osteoblast fate commitment"/>
    <property type="evidence" value="ECO:0000316"/>
    <property type="project" value="MGI"/>
</dbReference>
<dbReference type="GO" id="GO:0045669">
    <property type="term" value="P:positive regulation of osteoblast differentiation"/>
    <property type="evidence" value="ECO:0000316"/>
    <property type="project" value="MGI"/>
</dbReference>
<dbReference type="GO" id="GO:0045944">
    <property type="term" value="P:positive regulation of transcription by RNA polymerase II"/>
    <property type="evidence" value="ECO:0000314"/>
    <property type="project" value="MGI"/>
</dbReference>
<dbReference type="GO" id="GO:0060395">
    <property type="term" value="P:SMAD protein signal transduction"/>
    <property type="evidence" value="ECO:0000316"/>
    <property type="project" value="BHF-UCL"/>
</dbReference>
<dbReference type="GO" id="GO:0048863">
    <property type="term" value="P:stem cell differentiation"/>
    <property type="evidence" value="ECO:0000314"/>
    <property type="project" value="UniProtKB"/>
</dbReference>
<dbReference type="GO" id="GO:0007179">
    <property type="term" value="P:transforming growth factor beta receptor signaling pathway"/>
    <property type="evidence" value="ECO:0000314"/>
    <property type="project" value="MGI"/>
</dbReference>
<dbReference type="GO" id="GO:0001657">
    <property type="term" value="P:ureteric bud development"/>
    <property type="evidence" value="ECO:0000270"/>
    <property type="project" value="UniProtKB"/>
</dbReference>
<dbReference type="CDD" id="cd10490">
    <property type="entry name" value="MH1_SMAD_1_5_9"/>
    <property type="match status" value="1"/>
</dbReference>
<dbReference type="CDD" id="cd10497">
    <property type="entry name" value="MH2_SMAD_1_5_9"/>
    <property type="match status" value="1"/>
</dbReference>
<dbReference type="FunFam" id="2.60.200.10:FF:000001">
    <property type="entry name" value="Mothers against decapentaplegic homolog"/>
    <property type="match status" value="1"/>
</dbReference>
<dbReference type="FunFam" id="3.90.520.10:FF:000001">
    <property type="entry name" value="Mothers against decapentaplegic homolog"/>
    <property type="match status" value="1"/>
</dbReference>
<dbReference type="Gene3D" id="2.60.200.10">
    <property type="match status" value="1"/>
</dbReference>
<dbReference type="Gene3D" id="3.90.520.10">
    <property type="entry name" value="SMAD MH1 domain"/>
    <property type="match status" value="1"/>
</dbReference>
<dbReference type="InterPro" id="IPR013790">
    <property type="entry name" value="Dwarfin"/>
</dbReference>
<dbReference type="InterPro" id="IPR003619">
    <property type="entry name" value="MAD_homology1_Dwarfin-type"/>
</dbReference>
<dbReference type="InterPro" id="IPR013019">
    <property type="entry name" value="MAD_homology_MH1"/>
</dbReference>
<dbReference type="InterPro" id="IPR017855">
    <property type="entry name" value="SMAD-like_dom_sf"/>
</dbReference>
<dbReference type="InterPro" id="IPR001132">
    <property type="entry name" value="SMAD_dom_Dwarfin-type"/>
</dbReference>
<dbReference type="InterPro" id="IPR008984">
    <property type="entry name" value="SMAD_FHA_dom_sf"/>
</dbReference>
<dbReference type="InterPro" id="IPR036578">
    <property type="entry name" value="SMAD_MH1_sf"/>
</dbReference>
<dbReference type="PANTHER" id="PTHR13703:SF36">
    <property type="entry name" value="MOTHERS AGAINST DECAPENTAPLEGIC HOMOLOG 5"/>
    <property type="match status" value="1"/>
</dbReference>
<dbReference type="PANTHER" id="PTHR13703">
    <property type="entry name" value="SMAD"/>
    <property type="match status" value="1"/>
</dbReference>
<dbReference type="Pfam" id="PF03165">
    <property type="entry name" value="MH1"/>
    <property type="match status" value="1"/>
</dbReference>
<dbReference type="Pfam" id="PF03166">
    <property type="entry name" value="MH2"/>
    <property type="match status" value="1"/>
</dbReference>
<dbReference type="SMART" id="SM00523">
    <property type="entry name" value="DWA"/>
    <property type="match status" value="1"/>
</dbReference>
<dbReference type="SMART" id="SM00524">
    <property type="entry name" value="DWB"/>
    <property type="match status" value="1"/>
</dbReference>
<dbReference type="SUPFAM" id="SSF56366">
    <property type="entry name" value="SMAD MH1 domain"/>
    <property type="match status" value="1"/>
</dbReference>
<dbReference type="SUPFAM" id="SSF49879">
    <property type="entry name" value="SMAD/FHA domain"/>
    <property type="match status" value="1"/>
</dbReference>
<dbReference type="PROSITE" id="PS51075">
    <property type="entry name" value="MH1"/>
    <property type="match status" value="1"/>
</dbReference>
<dbReference type="PROSITE" id="PS51076">
    <property type="entry name" value="MH2"/>
    <property type="match status" value="1"/>
</dbReference>
<name>SMAD5_MOUSE</name>
<reference key="1">
    <citation type="journal article" date="1996" name="Proc. Natl. Acad. Sci. U.S.A.">
        <title>Mammalian dwarfins are phosphorylated in response to transforming growth factor beta and are implicated in control of cell growth.</title>
        <authorList>
            <person name="Yingling J.M."/>
            <person name="Das P."/>
            <person name="Savage C."/>
            <person name="Zhang M."/>
            <person name="Padgett R.W."/>
            <person name="Wang X.-F."/>
        </authorList>
    </citation>
    <scope>NUCLEOTIDE SEQUENCE [MRNA]</scope>
</reference>
<reference key="2">
    <citation type="journal article" date="1997" name="Mech. Dev.">
        <title>The C-terminal domain of Mad-like signal transducers is sufficient for biological activity in the Xenopus embryo and transcriptional activation.</title>
        <authorList>
            <person name="Meersseman G."/>
            <person name="Verschueren K."/>
            <person name="Nelles L."/>
            <person name="Blumenstock C."/>
            <person name="Kraft H."/>
            <person name="Wuytens G."/>
            <person name="Remacle J."/>
            <person name="Kozak C.A."/>
            <person name="Tylzanowski P."/>
            <person name="Niehrs C."/>
            <person name="Huylebroeck D."/>
        </authorList>
    </citation>
    <scope>NUCLEOTIDE SEQUENCE [MRNA]</scope>
</reference>
<reference key="3">
    <citation type="submission" date="1998-05" db="EMBL/GenBank/DDBJ databases">
        <title>Genomic organization and expression of mouse Smad5.</title>
        <authorList>
            <person name="Chang H."/>
            <person name="Kraft H."/>
            <person name="Verschueren K."/>
            <person name="Wang P."/>
            <person name="Huylebroeck D."/>
            <person name="Matzuk M.M."/>
        </authorList>
    </citation>
    <scope>NUCLEOTIDE SEQUENCE [MRNA]</scope>
    <source>
        <strain>129/Sv</strain>
    </source>
</reference>
<reference key="4">
    <citation type="journal article" date="2005" name="Science">
        <title>The transcriptional landscape of the mammalian genome.</title>
        <authorList>
            <person name="Carninci P."/>
            <person name="Kasukawa T."/>
            <person name="Katayama S."/>
            <person name="Gough J."/>
            <person name="Frith M.C."/>
            <person name="Maeda N."/>
            <person name="Oyama R."/>
            <person name="Ravasi T."/>
            <person name="Lenhard B."/>
            <person name="Wells C."/>
            <person name="Kodzius R."/>
            <person name="Shimokawa K."/>
            <person name="Bajic V.B."/>
            <person name="Brenner S.E."/>
            <person name="Batalov S."/>
            <person name="Forrest A.R."/>
            <person name="Zavolan M."/>
            <person name="Davis M.J."/>
            <person name="Wilming L.G."/>
            <person name="Aidinis V."/>
            <person name="Allen J.E."/>
            <person name="Ambesi-Impiombato A."/>
            <person name="Apweiler R."/>
            <person name="Aturaliya R.N."/>
            <person name="Bailey T.L."/>
            <person name="Bansal M."/>
            <person name="Baxter L."/>
            <person name="Beisel K.W."/>
            <person name="Bersano T."/>
            <person name="Bono H."/>
            <person name="Chalk A.M."/>
            <person name="Chiu K.P."/>
            <person name="Choudhary V."/>
            <person name="Christoffels A."/>
            <person name="Clutterbuck D.R."/>
            <person name="Crowe M.L."/>
            <person name="Dalla E."/>
            <person name="Dalrymple B.P."/>
            <person name="de Bono B."/>
            <person name="Della Gatta G."/>
            <person name="di Bernardo D."/>
            <person name="Down T."/>
            <person name="Engstrom P."/>
            <person name="Fagiolini M."/>
            <person name="Faulkner G."/>
            <person name="Fletcher C.F."/>
            <person name="Fukushima T."/>
            <person name="Furuno M."/>
            <person name="Futaki S."/>
            <person name="Gariboldi M."/>
            <person name="Georgii-Hemming P."/>
            <person name="Gingeras T.R."/>
            <person name="Gojobori T."/>
            <person name="Green R.E."/>
            <person name="Gustincich S."/>
            <person name="Harbers M."/>
            <person name="Hayashi Y."/>
            <person name="Hensch T.K."/>
            <person name="Hirokawa N."/>
            <person name="Hill D."/>
            <person name="Huminiecki L."/>
            <person name="Iacono M."/>
            <person name="Ikeo K."/>
            <person name="Iwama A."/>
            <person name="Ishikawa T."/>
            <person name="Jakt M."/>
            <person name="Kanapin A."/>
            <person name="Katoh M."/>
            <person name="Kawasawa Y."/>
            <person name="Kelso J."/>
            <person name="Kitamura H."/>
            <person name="Kitano H."/>
            <person name="Kollias G."/>
            <person name="Krishnan S.P."/>
            <person name="Kruger A."/>
            <person name="Kummerfeld S.K."/>
            <person name="Kurochkin I.V."/>
            <person name="Lareau L.F."/>
            <person name="Lazarevic D."/>
            <person name="Lipovich L."/>
            <person name="Liu J."/>
            <person name="Liuni S."/>
            <person name="McWilliam S."/>
            <person name="Madan Babu M."/>
            <person name="Madera M."/>
            <person name="Marchionni L."/>
            <person name="Matsuda H."/>
            <person name="Matsuzawa S."/>
            <person name="Miki H."/>
            <person name="Mignone F."/>
            <person name="Miyake S."/>
            <person name="Morris K."/>
            <person name="Mottagui-Tabar S."/>
            <person name="Mulder N."/>
            <person name="Nakano N."/>
            <person name="Nakauchi H."/>
            <person name="Ng P."/>
            <person name="Nilsson R."/>
            <person name="Nishiguchi S."/>
            <person name="Nishikawa S."/>
            <person name="Nori F."/>
            <person name="Ohara O."/>
            <person name="Okazaki Y."/>
            <person name="Orlando V."/>
            <person name="Pang K.C."/>
            <person name="Pavan W.J."/>
            <person name="Pavesi G."/>
            <person name="Pesole G."/>
            <person name="Petrovsky N."/>
            <person name="Piazza S."/>
            <person name="Reed J."/>
            <person name="Reid J.F."/>
            <person name="Ring B.Z."/>
            <person name="Ringwald M."/>
            <person name="Rost B."/>
            <person name="Ruan Y."/>
            <person name="Salzberg S.L."/>
            <person name="Sandelin A."/>
            <person name="Schneider C."/>
            <person name="Schoenbach C."/>
            <person name="Sekiguchi K."/>
            <person name="Semple C.A."/>
            <person name="Seno S."/>
            <person name="Sessa L."/>
            <person name="Sheng Y."/>
            <person name="Shibata Y."/>
            <person name="Shimada H."/>
            <person name="Shimada K."/>
            <person name="Silva D."/>
            <person name="Sinclair B."/>
            <person name="Sperling S."/>
            <person name="Stupka E."/>
            <person name="Sugiura K."/>
            <person name="Sultana R."/>
            <person name="Takenaka Y."/>
            <person name="Taki K."/>
            <person name="Tammoja K."/>
            <person name="Tan S.L."/>
            <person name="Tang S."/>
            <person name="Taylor M.S."/>
            <person name="Tegner J."/>
            <person name="Teichmann S.A."/>
            <person name="Ueda H.R."/>
            <person name="van Nimwegen E."/>
            <person name="Verardo R."/>
            <person name="Wei C.L."/>
            <person name="Yagi K."/>
            <person name="Yamanishi H."/>
            <person name="Zabarovsky E."/>
            <person name="Zhu S."/>
            <person name="Zimmer A."/>
            <person name="Hide W."/>
            <person name="Bult C."/>
            <person name="Grimmond S.M."/>
            <person name="Teasdale R.D."/>
            <person name="Liu E.T."/>
            <person name="Brusic V."/>
            <person name="Quackenbush J."/>
            <person name="Wahlestedt C."/>
            <person name="Mattick J.S."/>
            <person name="Hume D.A."/>
            <person name="Kai C."/>
            <person name="Sasaki D."/>
            <person name="Tomaru Y."/>
            <person name="Fukuda S."/>
            <person name="Kanamori-Katayama M."/>
            <person name="Suzuki M."/>
            <person name="Aoki J."/>
            <person name="Arakawa T."/>
            <person name="Iida J."/>
            <person name="Imamura K."/>
            <person name="Itoh M."/>
            <person name="Kato T."/>
            <person name="Kawaji H."/>
            <person name="Kawagashira N."/>
            <person name="Kawashima T."/>
            <person name="Kojima M."/>
            <person name="Kondo S."/>
            <person name="Konno H."/>
            <person name="Nakano K."/>
            <person name="Ninomiya N."/>
            <person name="Nishio T."/>
            <person name="Okada M."/>
            <person name="Plessy C."/>
            <person name="Shibata K."/>
            <person name="Shiraki T."/>
            <person name="Suzuki S."/>
            <person name="Tagami M."/>
            <person name="Waki K."/>
            <person name="Watahiki A."/>
            <person name="Okamura-Oho Y."/>
            <person name="Suzuki H."/>
            <person name="Kawai J."/>
            <person name="Hayashizaki Y."/>
        </authorList>
    </citation>
    <scope>NUCLEOTIDE SEQUENCE [LARGE SCALE MRNA]</scope>
    <source>
        <strain>C57BL/6J</strain>
        <tissue>Spinal cord</tissue>
    </source>
</reference>
<reference key="5">
    <citation type="journal article" date="2004" name="Genome Res.">
        <title>The status, quality, and expansion of the NIH full-length cDNA project: the Mammalian Gene Collection (MGC).</title>
        <authorList>
            <consortium name="The MGC Project Team"/>
        </authorList>
    </citation>
    <scope>NUCLEOTIDE SEQUENCE [LARGE SCALE MRNA]</scope>
    <source>
        <tissue>Eye</tissue>
    </source>
</reference>
<reference key="6">
    <citation type="journal article" date="1999" name="Development">
        <title>Angiogenesis defects and mesenchymal apoptosis in mice lacking SMAD5.</title>
        <authorList>
            <person name="Yang X."/>
            <person name="Castilla L.H."/>
            <person name="Xu X."/>
            <person name="Li C."/>
            <person name="Gotay J."/>
            <person name="Weinstein M."/>
            <person name="Liu P.P."/>
            <person name="Deng C.X."/>
        </authorList>
    </citation>
    <scope>FUNCTION</scope>
    <scope>DISRUPTION PHENOTYPE</scope>
    <scope>TISSUE SPECIFICITY</scope>
</reference>
<reference key="7">
    <citation type="journal article" date="2000" name="Cytokine Growth Factor Rev.">
        <title>Functions of mammalian Smad genes as revealed by targeted gene disruption in mice.</title>
        <authorList>
            <person name="Weinstein M."/>
            <person name="Yang X."/>
            <person name="Deng C.-X."/>
        </authorList>
    </citation>
    <scope>REVIEW</scope>
</reference>
<reference key="8">
    <citation type="journal article" date="2002" name="Mol. Cell. Biol.">
        <title>Identification of mZnf8, a mouse Kruppel-like transcriptional repressor, as a novel nuclear interaction partner of Smad1.</title>
        <authorList>
            <person name="Jiao K."/>
            <person name="Zhou Y."/>
            <person name="Hogan B.L.M."/>
        </authorList>
    </citation>
    <scope>INTERACTION WITH ZNF8</scope>
</reference>
<reference key="9">
    <citation type="journal article" date="2003" name="Blood">
        <title>Disruption of Smad5 gene leads to enhanced proliferation of high-proliferative potential precursors during embryonic hematopoiesis.</title>
        <authorList>
            <person name="Liu B."/>
            <person name="Sun Y."/>
            <person name="Jiang F."/>
            <person name="Zhang S."/>
            <person name="Wu Y."/>
            <person name="Lan Y."/>
            <person name="Yang X."/>
            <person name="Mao N."/>
        </authorList>
    </citation>
    <scope>FUNCTION</scope>
    <scope>DISRUPTION PHENOTYPE</scope>
</reference>
<reference key="10">
    <citation type="journal article" date="2004" name="Oncogene">
        <title>Negative regulation of transforming growth factor-beta (TGF-beta) signaling by WW domain-containing protein 1 (WWP1).</title>
        <authorList>
            <person name="Komuro A."/>
            <person name="Imamura T."/>
            <person name="Saitoh M."/>
            <person name="Yoshida Y."/>
            <person name="Yamori T."/>
            <person name="Miyazono K."/>
            <person name="Miyazawa K."/>
        </authorList>
    </citation>
    <scope>INTERACTION WITH WWP1</scope>
</reference>
<reference key="11">
    <citation type="journal article" date="2010" name="Cell">
        <title>A tissue-specific atlas of mouse protein phosphorylation and expression.</title>
        <authorList>
            <person name="Huttlin E.L."/>
            <person name="Jedrychowski M.P."/>
            <person name="Elias J.E."/>
            <person name="Goswami T."/>
            <person name="Rad R."/>
            <person name="Beausoleil S.A."/>
            <person name="Villen J."/>
            <person name="Haas W."/>
            <person name="Sowa M.E."/>
            <person name="Gygi S.P."/>
        </authorList>
    </citation>
    <scope>IDENTIFICATION BY MASS SPECTROMETRY [LARGE SCALE ANALYSIS]</scope>
    <source>
        <tissue>Kidney</tissue>
    </source>
</reference>
<reference key="12">
    <citation type="journal article" date="2011" name="J. Biol. Chem.">
        <title>Parathyroid hormone-responsive Smad3-related factor, Tmem119, promotes osteoblast differentiation and interacts with the bone morphogenetic protein-Runx2 pathway.</title>
        <authorList>
            <person name="Hisa I."/>
            <person name="Inoue Y."/>
            <person name="Hendy G.N."/>
            <person name="Canaff L."/>
            <person name="Kitazawa R."/>
            <person name="Kitazawa S."/>
            <person name="Komori T."/>
            <person name="Sugimoto T."/>
            <person name="Seino S."/>
            <person name="Kaji H."/>
        </authorList>
    </citation>
    <scope>INTERACTION WITH TMEM119</scope>
</reference>
<reference evidence="12 13 14" key="13">
    <citation type="journal article" date="2015" name="Nucleic Acids Res.">
        <title>Structural basis for the Smad5 MH1 domain to recognize different DNA sequences.</title>
        <authorList>
            <person name="Chai N."/>
            <person name="Li W.X."/>
            <person name="Wang J."/>
            <person name="Wang Z.X."/>
            <person name="Yang S.M."/>
            <person name="Wu J.W."/>
        </authorList>
    </citation>
    <scope>X-RAY CRYSTALLOGRAPHY (3.05 ANGSTROMS) OF 1-143 IN COMPLEX WITH ZN(2+)</scope>
    <scope>FUNCTION</scope>
    <scope>MUTAGENESIS OF HIS-80</scope>
</reference>
<gene>
    <name type="primary">Smad5</name>
    <name type="synonym">Madh5</name>
    <name type="synonym">Msmad5</name>
</gene>
<organism>
    <name type="scientific">Mus musculus</name>
    <name type="common">Mouse</name>
    <dbReference type="NCBI Taxonomy" id="10090"/>
    <lineage>
        <taxon>Eukaryota</taxon>
        <taxon>Metazoa</taxon>
        <taxon>Chordata</taxon>
        <taxon>Craniata</taxon>
        <taxon>Vertebrata</taxon>
        <taxon>Euteleostomi</taxon>
        <taxon>Mammalia</taxon>
        <taxon>Eutheria</taxon>
        <taxon>Euarchontoglires</taxon>
        <taxon>Glires</taxon>
        <taxon>Rodentia</taxon>
        <taxon>Myomorpha</taxon>
        <taxon>Muroidea</taxon>
        <taxon>Muridae</taxon>
        <taxon>Murinae</taxon>
        <taxon>Mus</taxon>
        <taxon>Mus</taxon>
    </lineage>
</organism>
<keyword id="KW-0002">3D-structure</keyword>
<keyword id="KW-0007">Acetylation</keyword>
<keyword id="KW-0037">Angiogenesis</keyword>
<keyword id="KW-0963">Cytoplasm</keyword>
<keyword id="KW-0217">Developmental protein</keyword>
<keyword id="KW-0221">Differentiation</keyword>
<keyword id="KW-0238">DNA-binding</keyword>
<keyword id="KW-0479">Metal-binding</keyword>
<keyword id="KW-0496">Mitochondrion</keyword>
<keyword id="KW-0539">Nucleus</keyword>
<keyword id="KW-0597">Phosphoprotein</keyword>
<keyword id="KW-1185">Reference proteome</keyword>
<keyword id="KW-0804">Transcription</keyword>
<keyword id="KW-0805">Transcription regulation</keyword>
<keyword id="KW-0862">Zinc</keyword>